<protein>
    <recommendedName>
        <fullName>Serotonin N-acetyltransferase</fullName>
        <shortName>Serotonin acetylase</shortName>
        <ecNumber evidence="6 10 11 14">2.3.1.87</ecNumber>
    </recommendedName>
    <alternativeName>
        <fullName>Aralkylamine N-acetyltransferase</fullName>
        <shortName>AA-NAT</shortName>
    </alternativeName>
</protein>
<reference key="1">
    <citation type="journal article" date="1995" name="Science">
        <title>Pineal serotonin N-acetyltransferase: expression cloning and molecular analysis.</title>
        <authorList>
            <person name="Coon S.L."/>
            <person name="Roseboom P.H."/>
            <person name="Baler R."/>
            <person name="Weller J.L."/>
            <person name="Namboodiri M.A.A."/>
            <person name="Koonin E.V."/>
            <person name="Klein D.C."/>
        </authorList>
    </citation>
    <scope>NUCLEOTIDE SEQUENCE [MRNA]</scope>
    <scope>TISSUE SPECIFICITY</scope>
    <scope>INDUCTION</scope>
    <source>
        <strain>Dorsett X Rambouillet</strain>
        <tissue>Pineal gland</tissue>
    </source>
</reference>
<reference key="2">
    <citation type="journal article" date="2001" name="J. Biol. Chem.">
        <title>cAMP regulation of arylalkylamine N-acetyltransferase (AANAT, EC 2.3.1.87): a new cell line (1E7) provides evidence of intracellular AANAT activation.</title>
        <authorList>
            <person name="Coon S.L."/>
            <person name="Weller J.L."/>
            <person name="Korf H.-W."/>
            <person name="Namboodiri M.A."/>
            <person name="Rollag M."/>
            <person name="Klein D.C."/>
        </authorList>
    </citation>
    <scope>INDUCTION</scope>
    <scope>BIOPHYSICOCHEMICAL PROPERTIES</scope>
</reference>
<reference key="3">
    <citation type="journal article" date="2001" name="Proc. Natl. Acad. Sci. U.S.A.">
        <title>Role of a pineal cAMP-operated arylalkylamine N-acetyltransferase/14-3-3-binding switch in melatonin synthesis.</title>
        <authorList>
            <person name="Ganguly S."/>
            <person name="Gastel J.A."/>
            <person name="Weller J.L."/>
            <person name="Schwartz C."/>
            <person name="Jaffe H."/>
            <person name="Namboodiri M.A."/>
            <person name="Coon S.L."/>
            <person name="Hickman A.B."/>
            <person name="Rollag M."/>
            <person name="Obsil T."/>
            <person name="Beauverger P."/>
            <person name="Ferry G."/>
            <person name="Boutin J.A."/>
            <person name="Klein D.C."/>
        </authorList>
    </citation>
    <scope>PHOSPHORYLATION AT THR-31</scope>
    <scope>INTERACTION WITH 14-3-3 PROTEINS</scope>
    <scope>IDENTIFICATION BY MASS SPECTROMETRY</scope>
</reference>
<reference key="4">
    <citation type="journal article" date="2001" name="Proc. Natl. Acad. Sci. U.S.A.">
        <authorList>
            <person name="Ganguly S."/>
            <person name="Gastel J.A."/>
            <person name="Weller J.L."/>
            <person name="Schwartz C."/>
            <person name="Jaffe H."/>
            <person name="Namboodiri M.A."/>
            <person name="Coon S.L."/>
            <person name="Hickman A.B."/>
            <person name="Rollag M."/>
            <person name="Obsil T."/>
            <person name="Beauverger P."/>
            <person name="Ferry G."/>
            <person name="Boutin J.A."/>
            <person name="Klein D.C."/>
        </authorList>
    </citation>
    <scope>ERRATUM OF PUBMED:11427721</scope>
</reference>
<reference key="5">
    <citation type="journal article" date="2003" name="Nat. Struct. Biol.">
        <title>Cellular stabilization of the melatonin rhythm enzyme induced by nonhydrolyzable phosphonate incorporation.</title>
        <authorList>
            <person name="Zheng W."/>
            <person name="Zhang Z."/>
            <person name="Ganguly S."/>
            <person name="Weller J.L."/>
            <person name="Klein D.C."/>
            <person name="Cole P.A."/>
        </authorList>
    </citation>
    <scope>PHOSPHORYLATION AT THR-31</scope>
    <scope>INTERACTION WITH YWHAZ</scope>
    <scope>IDENTIFICATION BY MASS SPECTROMETRY</scope>
</reference>
<reference key="6">
    <citation type="journal article" date="2005" name="Proc. Natl. Acad. Sci. U.S.A.">
        <title>Melatonin synthesis: 14-3-3-dependent activation and inhibition of arylalkylamine N-acetyltransferase mediated by phosphoserine-205.</title>
        <authorList>
            <person name="Ganguly S."/>
            <person name="Weller J.L."/>
            <person name="Ho A."/>
            <person name="Chemineau P."/>
            <person name="Malpaux B."/>
            <person name="Klein D.C."/>
        </authorList>
    </citation>
    <scope>FUNCTION</scope>
    <scope>PHOSPHORYLATION AT THR-31 AND SER-205</scope>
    <scope>INDUCTION</scope>
    <scope>INTERACTION WITH YWHAZ</scope>
    <scope>MUTAGENESIS OF THR-31 AND SER-205</scope>
</reference>
<reference key="7">
    <citation type="journal article" date="2008" name="J. Biol. Chem.">
        <title>Evidence that proline focuses movement of the floppy loop of arylalkylamine N-acetyltransferase (EC 2.3.1.87).</title>
        <authorList>
            <person name="Pavlicek J."/>
            <person name="Coon S.L."/>
            <person name="Ganguly S."/>
            <person name="Weller J.L."/>
            <person name="Hassan S.A."/>
            <person name="Sackett D.L."/>
            <person name="Klein D.C."/>
        </authorList>
    </citation>
    <scope>CATALYTIC ACTIVITY</scope>
    <scope>MUTAGENESIS OF ILE-57; VAL-59; PRO-64 AND 63-CYS--LEU-65</scope>
</reference>
<reference key="8">
    <citation type="journal article" date="1999" name="Cell">
        <title>The structural basis of ordered substrate binding by serotonin N-acetyltransferase: enzyme complex at 1.8 A resolution with a bisubstrate analog.</title>
        <authorList>
            <person name="Hickman A.B."/>
            <person name="Namboodiri M.A."/>
            <person name="Klein D.C."/>
            <person name="Dyda F."/>
        </authorList>
    </citation>
    <scope>X-RAY CRYSTALLOGRAPHY (1.8 ANGSTROMS) OF 30-195 IN COMPLEX WITH COA-S-ACETYLTRYPTAMINE</scope>
    <scope>IDENTIFICATION BY MASS SPECTROMETRY</scope>
    <scope>CATALYTIC ACTIVITY</scope>
    <scope>MUTAGENESIS OF HIS-120; HIS-122 AND TYR-168</scope>
</reference>
<reference key="9">
    <citation type="journal article" date="1999" name="Mol. Cell">
        <title>Melatonin biosynthesis: the structure of serotonin N-acetyltransferase at 2.5 A resolution suggests a catalytic mechanism.</title>
        <authorList>
            <person name="Hickman A.B."/>
            <person name="Klein D.C."/>
            <person name="Dyda F."/>
        </authorList>
    </citation>
    <scope>X-RAY CRYSTALLOGRAPHY (2.5 ANGSTROMS) OF 28-201</scope>
    <scope>IDENTIFICATION BY MASS SPECTROMETRY</scope>
    <scope>MUTAGENESIS OF CYS-160</scope>
</reference>
<reference key="10">
    <citation type="journal article" date="2001" name="Cell">
        <title>Crystal structure of the 14-3-3zeta:serotonin N-acetyltransferase complex. a role for scaffolding in enzyme regulation.</title>
        <authorList>
            <person name="Obsil T."/>
            <person name="Ghirlando R."/>
            <person name="Klein D.C."/>
            <person name="Ganguly S."/>
            <person name="Dyda F."/>
        </authorList>
    </citation>
    <scope>X-RAY CRYSTALLOGRAPHY (2.7 ANGSTROMS) OF 1-201 IN COMPLEX WITH THE ACETYL-COA AND SUBSTRATE ANALOG COA-S-ACETYLTRYPTAMINE AND YWHAZ</scope>
    <scope>AFFINITY FOR ACETYL-COA AND SEROTONIN</scope>
</reference>
<reference key="11">
    <citation type="journal article" date="2002" name="J. Biol. Chem.">
        <title>Investigation of the roles of catalytic residues in serotonin N-acetyltransferase.</title>
        <authorList>
            <person name="Scheibner K.A."/>
            <person name="De Angelis J."/>
            <person name="Burley S.K."/>
            <person name="Cole P.A."/>
        </authorList>
    </citation>
    <scope>X-RAY CRYSTALLOGRAPHY (2.3 ANGSTROMS) OF MUTANT PHE-168 IN COMPLEX WITH SUBSTRATE ANALOG</scope>
    <scope>CATALYTIC ACTIVITY</scope>
    <scope>BIOPHYSICOCHEMICAL PROPERTIES</scope>
    <scope>MUTAGENESIS OF HIS-120; HIS-122 AND TYR-168</scope>
</reference>
<reference key="12">
    <citation type="journal article" date="2002" name="J. Mol. Biol.">
        <title>X-ray crystallographic studies of serotonin N-acetyltransferase catalysis and inhibition.</title>
        <authorList>
            <person name="Wolf E."/>
            <person name="De Angelis J."/>
            <person name="Khalil E.M."/>
            <person name="Cole P.A."/>
            <person name="Burley S.K."/>
        </authorList>
    </citation>
    <scope>X-RAY CRYSTALLOGRAPHY (1.8 ANGSTROMS) IN COMPLEXES WITH ACETYL-COA AND SUBSTRATE ANALOGS</scope>
    <scope>CATALYTIC ACTIVITY</scope>
    <scope>MUTAGENESIS OF CYS-160 AND GLU-161</scope>
</reference>
<accession>Q29495</accession>
<comment type="function">
    <text evidence="13">Controls the night/day rhythm of melatonin production in the pineal gland. Catalyzes the N-acetylation of serotonin into N-acetylserotonin, the penultimate step in the synthesis of melatonin.</text>
</comment>
<comment type="catalytic activity">
    <reaction evidence="6 10 11 14">
        <text>a 2-arylethylamine + acetyl-CoA = an N-acetyl-2-arylethylamine + CoA + H(+)</text>
        <dbReference type="Rhea" id="RHEA:20497"/>
        <dbReference type="ChEBI" id="CHEBI:15378"/>
        <dbReference type="ChEBI" id="CHEBI:55469"/>
        <dbReference type="ChEBI" id="CHEBI:57287"/>
        <dbReference type="ChEBI" id="CHEBI:57288"/>
        <dbReference type="ChEBI" id="CHEBI:77827"/>
        <dbReference type="EC" id="2.3.1.87"/>
    </reaction>
</comment>
<comment type="biophysicochemical properties">
    <kinetics>
        <KM evidence="7 10">0.29 mM for acetyl-CoA</KM>
        <KM evidence="7 10">0.17 mM for tryptamine</KM>
        <KM evidence="7 10">0.2 mM for tryptamine</KM>
        <KM evidence="7 10">0.31 mM for 5-hydroxytryptamine</KM>
        <KM evidence="7 10">3.4 mM for phenylethylamine</KM>
        <KM evidence="7 10">3.4 mM for tyramine</KM>
    </kinetics>
</comment>
<comment type="pathway">
    <text evidence="16">Aromatic compound metabolism; melatonin biosynthesis; melatonin from serotonin: step 1/2.</text>
</comment>
<comment type="subunit">
    <text evidence="6 8 9 10 12 13">Monomer. Interacts with several 14-3-3 proteins, including YWHAB, YWHAE, YWHAG and YWHAZ, preferentially when phosphorylated at Thr-31. Phosphorylation on Ser-205 also allows binding to YWHAZ, but with a 10-fold lower affinity. The interaction with YWHAZ considerably increases affinity for arylalkylamines and acetyl-CoA and protects the enzyme from dephosphorylation and proteasomal degradation. It may also prevent thiol-dependent inactivation. The physiological stoichiometry of the interaction is not clear. In vitro studies show either 1:2 (i.e. 1 AANAT molecule per YWHAZ dimer) (PubMed:11427721) or 2:2 (PubMed:11336675).</text>
</comment>
<comment type="interaction">
    <interactant intactId="EBI-446413">
        <id>Q29495</id>
    </interactant>
    <interactant intactId="EBI-347088">
        <id>P63104</id>
        <label>YWHAZ</label>
    </interactant>
    <organismsDiffer>true</organismsDiffer>
    <experiments>3</experiments>
</comment>
<comment type="subcellular location">
    <subcellularLocation>
        <location evidence="2">Cytoplasm</location>
    </subcellularLocation>
</comment>
<comment type="tissue specificity">
    <text evidence="15">Highest expression in the pineal gland, followed by retina. Expressed at much lower levels in brainstem and pituitary gland. AANAT activity also detected at low levels in the olfactory lobe.</text>
</comment>
<comment type="induction">
    <text evidence="7 13 15">Exhibits night/day variations with a 7-fold increased activity at night. At the mRNA level, the nocturnal increase is lower than 2-fold.</text>
</comment>
<comment type="PTM">
    <text evidence="1">cAMP-dependent phosphorylation on both N-terminal Thr-31 and C-terminal Ser-205 regulates AANAT activity by promoting interaction with 14-3-3 proteins.</text>
</comment>
<comment type="similarity">
    <text evidence="16">Belongs to the acetyltransferase family. AANAT subfamily.</text>
</comment>
<organism>
    <name type="scientific">Ovis aries</name>
    <name type="common">Sheep</name>
    <dbReference type="NCBI Taxonomy" id="9940"/>
    <lineage>
        <taxon>Eukaryota</taxon>
        <taxon>Metazoa</taxon>
        <taxon>Chordata</taxon>
        <taxon>Craniata</taxon>
        <taxon>Vertebrata</taxon>
        <taxon>Euteleostomi</taxon>
        <taxon>Mammalia</taxon>
        <taxon>Eutheria</taxon>
        <taxon>Laurasiatheria</taxon>
        <taxon>Artiodactyla</taxon>
        <taxon>Ruminantia</taxon>
        <taxon>Pecora</taxon>
        <taxon>Bovidae</taxon>
        <taxon>Caprinae</taxon>
        <taxon>Ovis</taxon>
    </lineage>
</organism>
<dbReference type="EC" id="2.3.1.87" evidence="6 10 11 14"/>
<dbReference type="EMBL" id="U29663">
    <property type="protein sequence ID" value="AAC48690.1"/>
    <property type="molecule type" value="mRNA"/>
</dbReference>
<dbReference type="RefSeq" id="NP_001009461.1">
    <property type="nucleotide sequence ID" value="NM_001009461.1"/>
</dbReference>
<dbReference type="PDB" id="1B6B">
    <property type="method" value="X-ray"/>
    <property type="resolution" value="2.50 A"/>
    <property type="chains" value="A/B=28-201"/>
</dbReference>
<dbReference type="PDB" id="1CJW">
    <property type="method" value="X-ray"/>
    <property type="resolution" value="1.80 A"/>
    <property type="chains" value="A=30-195"/>
</dbReference>
<dbReference type="PDB" id="1IB1">
    <property type="method" value="X-ray"/>
    <property type="resolution" value="2.70 A"/>
    <property type="chains" value="E/F/G/H=2-201"/>
</dbReference>
<dbReference type="PDB" id="1KUV">
    <property type="method" value="X-ray"/>
    <property type="resolution" value="2.00 A"/>
    <property type="chains" value="A=1-207"/>
</dbReference>
<dbReference type="PDB" id="1KUX">
    <property type="method" value="X-ray"/>
    <property type="resolution" value="1.80 A"/>
    <property type="chains" value="A=1-207"/>
</dbReference>
<dbReference type="PDB" id="1KUY">
    <property type="method" value="X-ray"/>
    <property type="resolution" value="2.40 A"/>
    <property type="chains" value="A=1-207"/>
</dbReference>
<dbReference type="PDB" id="1L0C">
    <property type="method" value="X-ray"/>
    <property type="resolution" value="2.30 A"/>
    <property type="chains" value="A=1-207"/>
</dbReference>
<dbReference type="PDBsum" id="1B6B"/>
<dbReference type="PDBsum" id="1CJW"/>
<dbReference type="PDBsum" id="1IB1"/>
<dbReference type="PDBsum" id="1KUV"/>
<dbReference type="PDBsum" id="1KUX"/>
<dbReference type="PDBsum" id="1KUY"/>
<dbReference type="PDBsum" id="1L0C"/>
<dbReference type="SMR" id="Q29495"/>
<dbReference type="IntAct" id="Q29495">
    <property type="interactions" value="1"/>
</dbReference>
<dbReference type="MINT" id="Q29495"/>
<dbReference type="STRING" id="9940.ENSOARP00000007675"/>
<dbReference type="BindingDB" id="Q29495"/>
<dbReference type="ChEMBL" id="CHEMBL5452"/>
<dbReference type="iPTMnet" id="Q29495"/>
<dbReference type="PaxDb" id="9940-ENSOARP00000007675"/>
<dbReference type="Ensembl" id="ENSOART00215040605">
    <property type="protein sequence ID" value="ENSOARP00215020999"/>
    <property type="gene ID" value="ENSOARG00215024427"/>
</dbReference>
<dbReference type="Ensembl" id="ENSOART00220048343">
    <property type="protein sequence ID" value="ENSOARP00220025909"/>
    <property type="gene ID" value="ENSOARG00220029078"/>
</dbReference>
<dbReference type="Ensembl" id="ENSOART00225019008">
    <property type="protein sequence ID" value="ENSOARP00225009136"/>
    <property type="gene ID" value="ENSOARG00225011541"/>
</dbReference>
<dbReference type="GeneID" id="443531"/>
<dbReference type="KEGG" id="oas:443531"/>
<dbReference type="CTD" id="15"/>
<dbReference type="eggNOG" id="KOG4144">
    <property type="taxonomic scope" value="Eukaryota"/>
</dbReference>
<dbReference type="OrthoDB" id="30840at2759"/>
<dbReference type="BRENDA" id="2.3.1.87">
    <property type="organism ID" value="2668"/>
</dbReference>
<dbReference type="SABIO-RK" id="Q29495"/>
<dbReference type="UniPathway" id="UPA00837">
    <property type="reaction ID" value="UER00815"/>
</dbReference>
<dbReference type="EvolutionaryTrace" id="Q29495"/>
<dbReference type="PRO" id="PR:Q29495"/>
<dbReference type="Proteomes" id="UP000002356">
    <property type="component" value="Unplaced"/>
</dbReference>
<dbReference type="GO" id="GO:0048471">
    <property type="term" value="C:perinuclear region of cytoplasm"/>
    <property type="evidence" value="ECO:0000250"/>
    <property type="project" value="UniProtKB"/>
</dbReference>
<dbReference type="GO" id="GO:0004059">
    <property type="term" value="F:aralkylamine N-acetyltransferase activity"/>
    <property type="evidence" value="ECO:0000314"/>
    <property type="project" value="UniProtKB"/>
</dbReference>
<dbReference type="GO" id="GO:0071320">
    <property type="term" value="P:cellular response to cAMP"/>
    <property type="evidence" value="ECO:0000250"/>
    <property type="project" value="UniProtKB"/>
</dbReference>
<dbReference type="GO" id="GO:0007623">
    <property type="term" value="P:circadian rhythm"/>
    <property type="evidence" value="ECO:0000250"/>
    <property type="project" value="UniProtKB"/>
</dbReference>
<dbReference type="GO" id="GO:0030187">
    <property type="term" value="P:melatonin biosynthetic process"/>
    <property type="evidence" value="ECO:0000314"/>
    <property type="project" value="UniProtKB"/>
</dbReference>
<dbReference type="GO" id="GO:0006474">
    <property type="term" value="P:N-terminal protein amino acid acetylation"/>
    <property type="evidence" value="ECO:0000250"/>
    <property type="project" value="UniProtKB"/>
</dbReference>
<dbReference type="GO" id="GO:0009416">
    <property type="term" value="P:response to light stimulus"/>
    <property type="evidence" value="ECO:0007669"/>
    <property type="project" value="TreeGrafter"/>
</dbReference>
<dbReference type="CDD" id="cd04301">
    <property type="entry name" value="NAT_SF"/>
    <property type="match status" value="1"/>
</dbReference>
<dbReference type="FunFam" id="3.40.630.30:FF:000021">
    <property type="entry name" value="Serotonin N-acetyltransferase"/>
    <property type="match status" value="1"/>
</dbReference>
<dbReference type="Gene3D" id="3.40.630.30">
    <property type="match status" value="1"/>
</dbReference>
<dbReference type="IDEAL" id="IID50013"/>
<dbReference type="InterPro" id="IPR016181">
    <property type="entry name" value="Acyl_CoA_acyltransferase"/>
</dbReference>
<dbReference type="InterPro" id="IPR000182">
    <property type="entry name" value="GNAT_dom"/>
</dbReference>
<dbReference type="InterPro" id="IPR051635">
    <property type="entry name" value="SNAT-like"/>
</dbReference>
<dbReference type="PANTHER" id="PTHR10908">
    <property type="entry name" value="SEROTONIN N-ACETYLTRANSFERASE"/>
    <property type="match status" value="1"/>
</dbReference>
<dbReference type="PANTHER" id="PTHR10908:SF0">
    <property type="entry name" value="SEROTONIN N-ACETYLTRANSFERASE"/>
    <property type="match status" value="1"/>
</dbReference>
<dbReference type="Pfam" id="PF00583">
    <property type="entry name" value="Acetyltransf_1"/>
    <property type="match status" value="1"/>
</dbReference>
<dbReference type="SUPFAM" id="SSF55729">
    <property type="entry name" value="Acyl-CoA N-acyltransferases (Nat)"/>
    <property type="match status" value="1"/>
</dbReference>
<dbReference type="PROSITE" id="PS51186">
    <property type="entry name" value="GNAT"/>
    <property type="match status" value="1"/>
</dbReference>
<name>SNAT_SHEEP</name>
<proteinExistence type="evidence at protein level"/>
<keyword id="KW-0002">3D-structure</keyword>
<keyword id="KW-0012">Acyltransferase</keyword>
<keyword id="KW-0090">Biological rhythms</keyword>
<keyword id="KW-0963">Cytoplasm</keyword>
<keyword id="KW-0471">Melatonin biosynthesis</keyword>
<keyword id="KW-0597">Phosphoprotein</keyword>
<keyword id="KW-1185">Reference proteome</keyword>
<keyword id="KW-0808">Transferase</keyword>
<feature type="chain" id="PRO_0000074586" description="Serotonin N-acetyltransferase">
    <location>
        <begin position="1"/>
        <end position="207"/>
    </location>
</feature>
<feature type="domain" description="N-acetyltransferase" evidence="3">
    <location>
        <begin position="35"/>
        <end position="196"/>
    </location>
</feature>
<feature type="region of interest" description="Disordered" evidence="4">
    <location>
        <begin position="1"/>
        <end position="29"/>
    </location>
</feature>
<feature type="region of interest" description="YWHAZ-binding">
    <location>
        <begin position="28"/>
        <end position="35"/>
    </location>
</feature>
<feature type="binding site" evidence="6 8 11">
    <location>
        <begin position="124"/>
        <end position="126"/>
    </location>
    <ligand>
        <name>acetyl-CoA</name>
        <dbReference type="ChEBI" id="CHEBI:57288"/>
    </ligand>
</feature>
<feature type="binding site" evidence="8 10 11">
    <location>
        <position position="124"/>
    </location>
    <ligand>
        <name>substrate</name>
    </ligand>
</feature>
<feature type="binding site" evidence="6 8 11">
    <location>
        <begin position="132"/>
        <end position="137"/>
    </location>
    <ligand>
        <name>acetyl-CoA</name>
        <dbReference type="ChEBI" id="CHEBI:57288"/>
    </ligand>
</feature>
<feature type="binding site" evidence="8 10 11">
    <location>
        <position position="159"/>
    </location>
    <ligand>
        <name>substrate</name>
    </ligand>
</feature>
<feature type="binding site" evidence="6 8 11">
    <location>
        <begin position="168"/>
        <end position="170"/>
    </location>
    <ligand>
        <name>acetyl-CoA</name>
        <dbReference type="ChEBI" id="CHEBI:57288"/>
    </ligand>
</feature>
<feature type="site" description="Important for the catalytic mechanism; involved in substrate deprotonation" evidence="6 10">
    <location>
        <position position="120"/>
    </location>
</feature>
<feature type="site" description="Important for the catalytic mechanism; involved in substrate deprotonation" evidence="6 10">
    <location>
        <position position="122"/>
    </location>
</feature>
<feature type="modified residue" description="Phosphothreonine; by PKA" evidence="9 12 13">
    <location>
        <position position="31"/>
    </location>
</feature>
<feature type="modified residue" description="Phosphoserine; by PKA" evidence="13">
    <location>
        <position position="205"/>
    </location>
</feature>
<feature type="mutagenesis site" description="Loss of PKA-promoted YWHAZ-binding; when associated with G-205." evidence="13">
    <original>T</original>
    <variation>A</variation>
    <location>
        <position position="31"/>
    </location>
</feature>
<feature type="mutagenesis site" description="No effect on enzymatic activity; when associated with A-59." evidence="14">
    <original>I</original>
    <variation>A</variation>
    <location>
        <position position="57"/>
    </location>
</feature>
<feature type="mutagenesis site" description="No effect on enzymatic activity; when associated with A-57." evidence="14">
    <original>V</original>
    <variation>A</variation>
    <location>
        <position position="59"/>
    </location>
</feature>
<feature type="mutagenesis site" description="Drastic loss of enzymatic activity." evidence="14">
    <location>
        <begin position="63"/>
        <end position="65"/>
    </location>
</feature>
<feature type="mutagenesis site" description="Drastic loss of enzymatic activity." evidence="14">
    <original>P</original>
    <variation>A</variation>
    <variation>G</variation>
    <variation>W</variation>
    <location>
        <position position="64"/>
    </location>
</feature>
<feature type="mutagenesis site" description="Reduces catalytic activity 270-fold and decreases affinity for acetyl-coenzyme A; when associated with A-122." evidence="6 10">
    <original>H</original>
    <variation>A</variation>
    <location>
        <position position="120"/>
    </location>
</feature>
<feature type="mutagenesis site" description="Decreases affinity for acetyl-coenzyme A and for substrate." evidence="6 10">
    <original>H</original>
    <variation>Q</variation>
    <location>
        <position position="120"/>
    </location>
</feature>
<feature type="mutagenesis site" description="Reduces catalytic activity 270-fold and decreases affinity for acetyl-coenzyme A; when associated with A-120." evidence="6 10">
    <original>H</original>
    <variation>A</variation>
    <location>
        <position position="122"/>
    </location>
</feature>
<feature type="mutagenesis site" description="Decreases affinity for acetyl-coenzyme A and for substrate." evidence="6 10">
    <original>H</original>
    <variation>Q</variation>
    <location>
        <position position="122"/>
    </location>
</feature>
<feature type="mutagenesis site" description="No effect on catalytic activity." evidence="5 11">
    <original>C</original>
    <variation>A</variation>
    <location>
        <position position="160"/>
    </location>
</feature>
<feature type="mutagenesis site" description="Reduces catalytic activity." evidence="5 11">
    <original>C</original>
    <variation>S</variation>
    <location>
        <position position="160"/>
    </location>
</feature>
<feature type="mutagenesis site" description="No effect." evidence="11">
    <original>E</original>
    <variation>A</variation>
    <location>
        <position position="161"/>
    </location>
</feature>
<feature type="mutagenesis site" description="Reduces catalytic activity 30-fold." evidence="6 10">
    <original>Y</original>
    <variation>F</variation>
    <location>
        <position position="168"/>
    </location>
</feature>
<feature type="mutagenesis site" description="Loss of PKA-promoted YWHAZ-binding; when associated with A-31." evidence="13">
    <original>S</original>
    <variation>G</variation>
    <location>
        <position position="205"/>
    </location>
</feature>
<feature type="strand" evidence="17">
    <location>
        <begin position="34"/>
        <end position="38"/>
    </location>
</feature>
<feature type="helix" evidence="17">
    <location>
        <begin position="42"/>
        <end position="44"/>
    </location>
</feature>
<feature type="helix" evidence="17">
    <location>
        <begin position="45"/>
        <end position="55"/>
    </location>
</feature>
<feature type="helix" evidence="17">
    <location>
        <begin position="57"/>
        <end position="60"/>
    </location>
</feature>
<feature type="helix" evidence="17">
    <location>
        <begin position="67"/>
        <end position="76"/>
    </location>
</feature>
<feature type="helix" evidence="17">
    <location>
        <begin position="78"/>
        <end position="80"/>
    </location>
</feature>
<feature type="strand" evidence="17">
    <location>
        <begin position="81"/>
        <end position="86"/>
    </location>
</feature>
<feature type="strand" evidence="17">
    <location>
        <begin position="89"/>
        <end position="99"/>
    </location>
</feature>
<feature type="strand" evidence="17">
    <location>
        <begin position="101"/>
        <end position="103"/>
    </location>
</feature>
<feature type="helix" evidence="17">
    <location>
        <begin position="106"/>
        <end position="110"/>
    </location>
</feature>
<feature type="strand" evidence="17">
    <location>
        <begin position="118"/>
        <end position="126"/>
    </location>
</feature>
<feature type="helix" evidence="18">
    <location>
        <begin position="128"/>
        <end position="130"/>
    </location>
</feature>
<feature type="strand" evidence="18">
    <location>
        <begin position="132"/>
        <end position="134"/>
    </location>
</feature>
<feature type="helix" evidence="17">
    <location>
        <begin position="135"/>
        <end position="148"/>
    </location>
</feature>
<feature type="strand" evidence="19">
    <location>
        <begin position="150"/>
        <end position="152"/>
    </location>
</feature>
<feature type="strand" evidence="17">
    <location>
        <begin position="155"/>
        <end position="160"/>
    </location>
</feature>
<feature type="helix" evidence="17">
    <location>
        <begin position="162"/>
        <end position="164"/>
    </location>
</feature>
<feature type="helix" evidence="17">
    <location>
        <begin position="165"/>
        <end position="169"/>
    </location>
</feature>
<feature type="turn" evidence="17">
    <location>
        <begin position="170"/>
        <end position="172"/>
    </location>
</feature>
<feature type="strand" evidence="17">
    <location>
        <begin position="173"/>
        <end position="178"/>
    </location>
</feature>
<feature type="strand" evidence="17">
    <location>
        <begin position="189"/>
        <end position="194"/>
    </location>
</feature>
<sequence>MSTPSVHCLKPSPLHLPSGIPGSPGRQRRHTLPANEFRCLTPEDAAGVFEIEREAFISVSGNCPLNLDEVQHFLTLCPELSLGWFVEGRLVAFIIGSLWDEERLTQESLALHRPRGHSAHLHALAVHRSFRQQGKGSVLLWRYLHHVGAQPAVRRAVLMCEDALVPFYQRFGFHPAGPCAIVVGSLTFTEMHCSLRGHAALRRNSDR</sequence>
<evidence type="ECO:0000250" key="1"/>
<evidence type="ECO:0000250" key="2">
    <source>
        <dbReference type="UniProtKB" id="Q16613"/>
    </source>
</evidence>
<evidence type="ECO:0000255" key="3">
    <source>
        <dbReference type="PROSITE-ProRule" id="PRU00532"/>
    </source>
</evidence>
<evidence type="ECO:0000256" key="4">
    <source>
        <dbReference type="SAM" id="MobiDB-lite"/>
    </source>
</evidence>
<evidence type="ECO:0000269" key="5">
    <source>
    </source>
</evidence>
<evidence type="ECO:0000269" key="6">
    <source>
    </source>
</evidence>
<evidence type="ECO:0000269" key="7">
    <source>
    </source>
</evidence>
<evidence type="ECO:0000269" key="8">
    <source>
    </source>
</evidence>
<evidence type="ECO:0000269" key="9">
    <source>
    </source>
</evidence>
<evidence type="ECO:0000269" key="10">
    <source>
    </source>
</evidence>
<evidence type="ECO:0000269" key="11">
    <source>
    </source>
</evidence>
<evidence type="ECO:0000269" key="12">
    <source>
    </source>
</evidence>
<evidence type="ECO:0000269" key="13">
    <source>
    </source>
</evidence>
<evidence type="ECO:0000269" key="14">
    <source>
    </source>
</evidence>
<evidence type="ECO:0000269" key="15">
    <source>
    </source>
</evidence>
<evidence type="ECO:0000305" key="16"/>
<evidence type="ECO:0007829" key="17">
    <source>
        <dbReference type="PDB" id="1CJW"/>
    </source>
</evidence>
<evidence type="ECO:0007829" key="18">
    <source>
        <dbReference type="PDB" id="1KUX"/>
    </source>
</evidence>
<evidence type="ECO:0007829" key="19">
    <source>
        <dbReference type="PDB" id="1L0C"/>
    </source>
</evidence>
<gene>
    <name type="primary">AANAT</name>
    <name type="synonym">SNAT</name>
</gene>